<keyword id="KW-0963">Cytoplasm</keyword>
<keyword id="KW-0413">Isomerase</keyword>
<keyword id="KW-0464">Manganese</keyword>
<keyword id="KW-0479">Metal-binding</keyword>
<proteinExistence type="inferred from homology"/>
<sequence length="407" mass="44481">MTGRICILVMDSFGIGASLDAARYGDAGANTLVHIYEACKRGECDIEGARKGPLMLPNLAGKGLYHAAMASSGLPFIDLATLAIPSGYYGYAVEQSLGKDTPSGHWEMAGVPVTFEWGYFPDKPYCFPEELISEFIKQCNLPGVLGEKHASGTIIMDELGEEHIRTGKPIVYTSADSVFQIAAHEEAFGLQRLYDICKIARNLVDKYQIGRVIARPFTGKPGSFKRTGNRKDYATPPPEKTLLDFLKEDGREVIAIGKIADIYAHQGVTQEIKADGNMALFDATLSAMKTAPQGSLVFTNFVDFDSSYGHRRDIAGYAHALEQFDARLPELEVLLQPNDMVFIAADHGCDPTFPGSDHTREHIPVLVFGPQVNSKFIGRRDCFADIGQSIAEHLQLSSPLTHGVSFL</sequence>
<protein>
    <recommendedName>
        <fullName evidence="1">Phosphopentomutase</fullName>
        <ecNumber evidence="1">5.4.2.7</ecNumber>
    </recommendedName>
    <alternativeName>
        <fullName evidence="1">Phosphodeoxyribomutase</fullName>
    </alternativeName>
</protein>
<reference key="1">
    <citation type="journal article" date="2004" name="Nat. Genet.">
        <title>Evidence in the Legionella pneumophila genome for exploitation of host cell functions and high genome plasticity.</title>
        <authorList>
            <person name="Cazalet C."/>
            <person name="Rusniok C."/>
            <person name="Brueggemann H."/>
            <person name="Zidane N."/>
            <person name="Magnier A."/>
            <person name="Ma L."/>
            <person name="Tichit M."/>
            <person name="Jarraud S."/>
            <person name="Bouchier C."/>
            <person name="Vandenesch F."/>
            <person name="Kunst F."/>
            <person name="Etienne J."/>
            <person name="Glaser P."/>
            <person name="Buchrieser C."/>
        </authorList>
    </citation>
    <scope>NUCLEOTIDE SEQUENCE [LARGE SCALE GENOMIC DNA]</scope>
    <source>
        <strain>Lens</strain>
    </source>
</reference>
<comment type="function">
    <text evidence="1">Isomerase that catalyzes the conversion of deoxy-ribose 1-phosphate (dRib-1-P) and ribose 1-phosphate (Rib-1-P) to deoxy-ribose 5-phosphate (dRib-5-P) and ribose 5-phosphate (Rib-5-P), respectively.</text>
</comment>
<comment type="catalytic activity">
    <reaction evidence="1">
        <text>2-deoxy-alpha-D-ribose 1-phosphate = 2-deoxy-D-ribose 5-phosphate</text>
        <dbReference type="Rhea" id="RHEA:27658"/>
        <dbReference type="ChEBI" id="CHEBI:57259"/>
        <dbReference type="ChEBI" id="CHEBI:62877"/>
        <dbReference type="EC" id="5.4.2.7"/>
    </reaction>
</comment>
<comment type="catalytic activity">
    <reaction evidence="1">
        <text>alpha-D-ribose 1-phosphate = D-ribose 5-phosphate</text>
        <dbReference type="Rhea" id="RHEA:18793"/>
        <dbReference type="ChEBI" id="CHEBI:57720"/>
        <dbReference type="ChEBI" id="CHEBI:78346"/>
        <dbReference type="EC" id="5.4.2.7"/>
    </reaction>
</comment>
<comment type="cofactor">
    <cofactor evidence="1">
        <name>Mn(2+)</name>
        <dbReference type="ChEBI" id="CHEBI:29035"/>
    </cofactor>
    <text evidence="1">Binds 2 manganese ions.</text>
</comment>
<comment type="pathway">
    <text evidence="1">Carbohydrate degradation; 2-deoxy-D-ribose 1-phosphate degradation; D-glyceraldehyde 3-phosphate and acetaldehyde from 2-deoxy-alpha-D-ribose 1-phosphate: step 1/2.</text>
</comment>
<comment type="subcellular location">
    <subcellularLocation>
        <location evidence="1">Cytoplasm</location>
    </subcellularLocation>
</comment>
<comment type="similarity">
    <text evidence="1">Belongs to the phosphopentomutase family.</text>
</comment>
<feature type="chain" id="PRO_0000258291" description="Phosphopentomutase">
    <location>
        <begin position="1"/>
        <end position="407"/>
    </location>
</feature>
<feature type="binding site" evidence="1">
    <location>
        <position position="11"/>
    </location>
    <ligand>
        <name>Mn(2+)</name>
        <dbReference type="ChEBI" id="CHEBI:29035"/>
        <label>1</label>
    </ligand>
</feature>
<feature type="binding site" evidence="1">
    <location>
        <position position="305"/>
    </location>
    <ligand>
        <name>Mn(2+)</name>
        <dbReference type="ChEBI" id="CHEBI:29035"/>
        <label>2</label>
    </ligand>
</feature>
<feature type="binding site" evidence="1">
    <location>
        <position position="310"/>
    </location>
    <ligand>
        <name>Mn(2+)</name>
        <dbReference type="ChEBI" id="CHEBI:29035"/>
        <label>2</label>
    </ligand>
</feature>
<feature type="binding site" evidence="1">
    <location>
        <position position="346"/>
    </location>
    <ligand>
        <name>Mn(2+)</name>
        <dbReference type="ChEBI" id="CHEBI:29035"/>
        <label>1</label>
    </ligand>
</feature>
<feature type="binding site" evidence="1">
    <location>
        <position position="347"/>
    </location>
    <ligand>
        <name>Mn(2+)</name>
        <dbReference type="ChEBI" id="CHEBI:29035"/>
        <label>1</label>
    </ligand>
</feature>
<feature type="binding site" evidence="1">
    <location>
        <position position="358"/>
    </location>
    <ligand>
        <name>Mn(2+)</name>
        <dbReference type="ChEBI" id="CHEBI:29035"/>
        <label>2</label>
    </ligand>
</feature>
<dbReference type="EC" id="5.4.2.7" evidence="1"/>
<dbReference type="EMBL" id="CR628337">
    <property type="protein sequence ID" value="CAH14910.1"/>
    <property type="molecule type" value="Genomic_DNA"/>
</dbReference>
<dbReference type="RefSeq" id="WP_011214859.1">
    <property type="nucleotide sequence ID" value="NC_006369.1"/>
</dbReference>
<dbReference type="SMR" id="Q5WYR0"/>
<dbReference type="KEGG" id="lpf:lpl0676"/>
<dbReference type="LegioList" id="lpl0676"/>
<dbReference type="HOGENOM" id="CLU_053861_0_0_6"/>
<dbReference type="UniPathway" id="UPA00002">
    <property type="reaction ID" value="UER00467"/>
</dbReference>
<dbReference type="Proteomes" id="UP000002517">
    <property type="component" value="Chromosome"/>
</dbReference>
<dbReference type="GO" id="GO:0005829">
    <property type="term" value="C:cytosol"/>
    <property type="evidence" value="ECO:0007669"/>
    <property type="project" value="TreeGrafter"/>
</dbReference>
<dbReference type="GO" id="GO:0000287">
    <property type="term" value="F:magnesium ion binding"/>
    <property type="evidence" value="ECO:0007669"/>
    <property type="project" value="InterPro"/>
</dbReference>
<dbReference type="GO" id="GO:0030145">
    <property type="term" value="F:manganese ion binding"/>
    <property type="evidence" value="ECO:0007669"/>
    <property type="project" value="UniProtKB-UniRule"/>
</dbReference>
<dbReference type="GO" id="GO:0008973">
    <property type="term" value="F:phosphopentomutase activity"/>
    <property type="evidence" value="ECO:0007669"/>
    <property type="project" value="UniProtKB-UniRule"/>
</dbReference>
<dbReference type="GO" id="GO:0006018">
    <property type="term" value="P:2-deoxyribose 1-phosphate catabolic process"/>
    <property type="evidence" value="ECO:0007669"/>
    <property type="project" value="UniProtKB-UniRule"/>
</dbReference>
<dbReference type="GO" id="GO:0006015">
    <property type="term" value="P:5-phosphoribose 1-diphosphate biosynthetic process"/>
    <property type="evidence" value="ECO:0007669"/>
    <property type="project" value="UniProtKB-UniPathway"/>
</dbReference>
<dbReference type="GO" id="GO:0043094">
    <property type="term" value="P:metabolic compound salvage"/>
    <property type="evidence" value="ECO:0007669"/>
    <property type="project" value="InterPro"/>
</dbReference>
<dbReference type="GO" id="GO:0009117">
    <property type="term" value="P:nucleotide metabolic process"/>
    <property type="evidence" value="ECO:0007669"/>
    <property type="project" value="InterPro"/>
</dbReference>
<dbReference type="CDD" id="cd16009">
    <property type="entry name" value="PPM"/>
    <property type="match status" value="1"/>
</dbReference>
<dbReference type="FunFam" id="3.30.70.1250:FF:000001">
    <property type="entry name" value="Phosphopentomutase"/>
    <property type="match status" value="1"/>
</dbReference>
<dbReference type="Gene3D" id="3.40.720.10">
    <property type="entry name" value="Alkaline Phosphatase, subunit A"/>
    <property type="match status" value="1"/>
</dbReference>
<dbReference type="Gene3D" id="3.30.70.1250">
    <property type="entry name" value="Phosphopentomutase"/>
    <property type="match status" value="1"/>
</dbReference>
<dbReference type="HAMAP" id="MF_00740">
    <property type="entry name" value="Phosphopentomut"/>
    <property type="match status" value="1"/>
</dbReference>
<dbReference type="InterPro" id="IPR017850">
    <property type="entry name" value="Alkaline_phosphatase_core_sf"/>
</dbReference>
<dbReference type="InterPro" id="IPR010045">
    <property type="entry name" value="DeoB"/>
</dbReference>
<dbReference type="InterPro" id="IPR006124">
    <property type="entry name" value="Metalloenzyme"/>
</dbReference>
<dbReference type="InterPro" id="IPR024052">
    <property type="entry name" value="Phosphopentomutase_DeoB_cap_sf"/>
</dbReference>
<dbReference type="NCBIfam" id="TIGR01696">
    <property type="entry name" value="deoB"/>
    <property type="match status" value="1"/>
</dbReference>
<dbReference type="NCBIfam" id="NF003766">
    <property type="entry name" value="PRK05362.1"/>
    <property type="match status" value="1"/>
</dbReference>
<dbReference type="PANTHER" id="PTHR21110">
    <property type="entry name" value="PHOSPHOPENTOMUTASE"/>
    <property type="match status" value="1"/>
</dbReference>
<dbReference type="PANTHER" id="PTHR21110:SF0">
    <property type="entry name" value="PHOSPHOPENTOMUTASE"/>
    <property type="match status" value="1"/>
</dbReference>
<dbReference type="Pfam" id="PF01676">
    <property type="entry name" value="Metalloenzyme"/>
    <property type="match status" value="1"/>
</dbReference>
<dbReference type="PIRSF" id="PIRSF001491">
    <property type="entry name" value="Ppentomutase"/>
    <property type="match status" value="1"/>
</dbReference>
<dbReference type="SUPFAM" id="SSF53649">
    <property type="entry name" value="Alkaline phosphatase-like"/>
    <property type="match status" value="1"/>
</dbReference>
<dbReference type="SUPFAM" id="SSF143856">
    <property type="entry name" value="DeoB insert domain-like"/>
    <property type="match status" value="1"/>
</dbReference>
<evidence type="ECO:0000255" key="1">
    <source>
        <dbReference type="HAMAP-Rule" id="MF_00740"/>
    </source>
</evidence>
<organism>
    <name type="scientific">Legionella pneumophila (strain Lens)</name>
    <dbReference type="NCBI Taxonomy" id="297245"/>
    <lineage>
        <taxon>Bacteria</taxon>
        <taxon>Pseudomonadati</taxon>
        <taxon>Pseudomonadota</taxon>
        <taxon>Gammaproteobacteria</taxon>
        <taxon>Legionellales</taxon>
        <taxon>Legionellaceae</taxon>
        <taxon>Legionella</taxon>
    </lineage>
</organism>
<name>DEOB_LEGPL</name>
<accession>Q5WYR0</accession>
<gene>
    <name evidence="1" type="primary">deoB</name>
    <name type="ordered locus">lpl0676</name>
</gene>